<keyword id="KW-0256">Endoplasmic reticulum</keyword>
<keyword id="KW-0407">Ion channel</keyword>
<keyword id="KW-0406">Ion transport</keyword>
<keyword id="KW-0472">Membrane</keyword>
<keyword id="KW-0630">Potassium</keyword>
<keyword id="KW-0631">Potassium channel</keyword>
<keyword id="KW-0633">Potassium transport</keyword>
<keyword id="KW-1185">Reference proteome</keyword>
<keyword id="KW-0812">Transmembrane</keyword>
<keyword id="KW-1133">Transmembrane helix</keyword>
<keyword id="KW-0813">Transport</keyword>
<proteinExistence type="evidence at transcript level"/>
<gene>
    <name type="primary">tmem38b</name>
    <name type="ORF">TEgg035c21.1</name>
</gene>
<accession>Q28FA9</accession>
<sequence length="284" mass="31843">MESFSELSLQFSQLSMFPFFETAHYLTSVMSAREQAGAVDVASRSPLASWFSSMLYCFGGGILSSILLAEPPVGILSNTTSIILASAVWYMVYYFPYDLFYNCFFFLPIRLILAGMKEVTRTWKILSGVAHAHSHYKDAMLVMITIGWARGAGGGLISNFEQLVRGVWKPESNEFLKMSYPVKVTLIGAVLFTLQHGQYLPISRHNLMFIYTLFLILIKVTMMLTRSTASPFLPLETSLQHILFSRQQIPAEVRESPSSSGDKGKPSKKTLDKDSGEQDNKKDN</sequence>
<protein>
    <recommendedName>
        <fullName>Trimeric intracellular cation channel type B</fullName>
        <shortName>TRIC-B</shortName>
        <shortName>TRICB</shortName>
    </recommendedName>
    <alternativeName>
        <fullName>Transmembrane protein 38B</fullName>
    </alternativeName>
</protein>
<organism>
    <name type="scientific">Xenopus tropicalis</name>
    <name type="common">Western clawed frog</name>
    <name type="synonym">Silurana tropicalis</name>
    <dbReference type="NCBI Taxonomy" id="8364"/>
    <lineage>
        <taxon>Eukaryota</taxon>
        <taxon>Metazoa</taxon>
        <taxon>Chordata</taxon>
        <taxon>Craniata</taxon>
        <taxon>Vertebrata</taxon>
        <taxon>Euteleostomi</taxon>
        <taxon>Amphibia</taxon>
        <taxon>Batrachia</taxon>
        <taxon>Anura</taxon>
        <taxon>Pipoidea</taxon>
        <taxon>Pipidae</taxon>
        <taxon>Xenopodinae</taxon>
        <taxon>Xenopus</taxon>
        <taxon>Silurana</taxon>
    </lineage>
</organism>
<name>TM38B_XENTR</name>
<comment type="function">
    <text evidence="1">Intracellular monovalent cation channel required for maintenance of rapid intracellular calcium release. Acts as a potassium counter-ion channel that functions in synchronization with calcium release from intracellular stores. Activated by increased cytosolic Ca(2+) levels.</text>
</comment>
<comment type="catalytic activity">
    <reaction evidence="1">
        <text>K(+)(in) = K(+)(out)</text>
        <dbReference type="Rhea" id="RHEA:29463"/>
        <dbReference type="ChEBI" id="CHEBI:29103"/>
    </reaction>
</comment>
<comment type="activity regulation">
    <text evidence="1">Channel activity is activated by increased cytosolic Ca(2+) levels and blocked by luminal high Ca(2+) levels.</text>
</comment>
<comment type="subunit">
    <text evidence="1">Homotrimer; conformation seems to be controled by binding to diacylglycerol (DAG).</text>
</comment>
<comment type="subcellular location">
    <subcellularLocation>
        <location evidence="2">Endoplasmic reticulum membrane</location>
        <topology evidence="2">Multi-pass membrane protein</topology>
    </subcellularLocation>
</comment>
<comment type="similarity">
    <text evidence="6">Belongs to the TMEM38 family.</text>
</comment>
<dbReference type="EMBL" id="CR762060">
    <property type="protein sequence ID" value="CAJ81929.1"/>
    <property type="molecule type" value="mRNA"/>
</dbReference>
<dbReference type="EMBL" id="BC135582">
    <property type="protein sequence ID" value="AAI35583.1"/>
    <property type="molecule type" value="mRNA"/>
</dbReference>
<dbReference type="RefSeq" id="NP_001016127.1">
    <property type="nucleotide sequence ID" value="NM_001016127.3"/>
</dbReference>
<dbReference type="SMR" id="Q28FA9"/>
<dbReference type="FunCoup" id="Q28FA9">
    <property type="interactions" value="1379"/>
</dbReference>
<dbReference type="STRING" id="8364.ENSXETP00000015872"/>
<dbReference type="PaxDb" id="8364-ENSXETP00000001972"/>
<dbReference type="GeneID" id="548881"/>
<dbReference type="KEGG" id="xtr:548881"/>
<dbReference type="AGR" id="Xenbase:XB-GENE-5849692"/>
<dbReference type="CTD" id="55151"/>
<dbReference type="Xenbase" id="XB-GENE-5849692">
    <property type="gene designation" value="tmem38b"/>
</dbReference>
<dbReference type="eggNOG" id="KOG3944">
    <property type="taxonomic scope" value="Eukaryota"/>
</dbReference>
<dbReference type="HOGENOM" id="CLU_076376_0_0_1"/>
<dbReference type="InParanoid" id="Q28FA9"/>
<dbReference type="OMA" id="HNELLRP"/>
<dbReference type="OrthoDB" id="195817at2759"/>
<dbReference type="PhylomeDB" id="Q28FA9"/>
<dbReference type="TreeFam" id="TF313483"/>
<dbReference type="Proteomes" id="UP000008143">
    <property type="component" value="Chromosome 1"/>
</dbReference>
<dbReference type="Bgee" id="ENSXETG00000000907">
    <property type="expression patterns" value="Expressed in mesonephros and 12 other cell types or tissues"/>
</dbReference>
<dbReference type="GO" id="GO:0005783">
    <property type="term" value="C:endoplasmic reticulum"/>
    <property type="evidence" value="ECO:0000250"/>
    <property type="project" value="UniProtKB"/>
</dbReference>
<dbReference type="GO" id="GO:0005789">
    <property type="term" value="C:endoplasmic reticulum membrane"/>
    <property type="evidence" value="ECO:0007669"/>
    <property type="project" value="UniProtKB-SubCell"/>
</dbReference>
<dbReference type="GO" id="GO:0042802">
    <property type="term" value="F:identical protein binding"/>
    <property type="evidence" value="ECO:0007669"/>
    <property type="project" value="InterPro"/>
</dbReference>
<dbReference type="GO" id="GO:0005267">
    <property type="term" value="F:potassium channel activity"/>
    <property type="evidence" value="ECO:0000250"/>
    <property type="project" value="UniProtKB"/>
</dbReference>
<dbReference type="GO" id="GO:0051279">
    <property type="term" value="P:regulation of release of sequestered calcium ion into cytosol"/>
    <property type="evidence" value="ECO:0000250"/>
    <property type="project" value="UniProtKB"/>
</dbReference>
<dbReference type="InterPro" id="IPR007866">
    <property type="entry name" value="TRIC_channel"/>
</dbReference>
<dbReference type="PANTHER" id="PTHR12454">
    <property type="entry name" value="TRIMERIC INTRACELLULAR CATION CHANNEL"/>
    <property type="match status" value="1"/>
</dbReference>
<dbReference type="PANTHER" id="PTHR12454:SF5">
    <property type="entry name" value="TRIMERIC INTRACELLULAR CATION CHANNEL TYPE B"/>
    <property type="match status" value="1"/>
</dbReference>
<dbReference type="Pfam" id="PF05197">
    <property type="entry name" value="TRIC"/>
    <property type="match status" value="1"/>
</dbReference>
<evidence type="ECO:0000250" key="1">
    <source>
        <dbReference type="UniProtKB" id="Q6GN30"/>
    </source>
</evidence>
<evidence type="ECO:0000250" key="2">
    <source>
        <dbReference type="UniProtKB" id="Q9DAV9"/>
    </source>
</evidence>
<evidence type="ECO:0000250" key="3">
    <source>
        <dbReference type="UniProtKB" id="Q9NA73"/>
    </source>
</evidence>
<evidence type="ECO:0000255" key="4"/>
<evidence type="ECO:0000256" key="5">
    <source>
        <dbReference type="SAM" id="MobiDB-lite"/>
    </source>
</evidence>
<evidence type="ECO:0000305" key="6"/>
<feature type="chain" id="PRO_0000291530" description="Trimeric intracellular cation channel type B">
    <location>
        <begin position="1"/>
        <end position="284"/>
    </location>
</feature>
<feature type="topological domain" description="Lumenal" evidence="6">
    <location>
        <begin position="1"/>
        <end position="15"/>
    </location>
</feature>
<feature type="transmembrane region" description="Helical;Name=1" evidence="4">
    <location>
        <begin position="16"/>
        <end position="32"/>
    </location>
</feature>
<feature type="topological domain" description="Cytoplasmic" evidence="6">
    <location>
        <begin position="33"/>
        <end position="44"/>
    </location>
</feature>
<feature type="transmembrane region" description="Helical;Name=2" evidence="4">
    <location>
        <begin position="45"/>
        <end position="68"/>
    </location>
</feature>
<feature type="topological domain" description="Lumenal" evidence="6">
    <location>
        <begin position="69"/>
        <end position="79"/>
    </location>
</feature>
<feature type="transmembrane region" description="Helical;Name=3" evidence="4">
    <location>
        <begin position="80"/>
        <end position="99"/>
    </location>
</feature>
<feature type="topological domain" description="Cytoplasmic" evidence="6">
    <location>
        <begin position="100"/>
        <end position="102"/>
    </location>
</feature>
<feature type="transmembrane region" description="Helical;Name=4" evidence="4">
    <location>
        <begin position="103"/>
        <end position="121"/>
    </location>
</feature>
<feature type="topological domain" description="Lumenal" evidence="6">
    <location>
        <begin position="122"/>
        <end position="139"/>
    </location>
</feature>
<feature type="transmembrane region" description="Helical;Name=5" evidence="4">
    <location>
        <begin position="140"/>
        <end position="157"/>
    </location>
</feature>
<feature type="topological domain" description="Cytoplasmic" evidence="6">
    <location>
        <begin position="158"/>
        <end position="178"/>
    </location>
</feature>
<feature type="transmembrane region" description="Helical;Name=6" evidence="4">
    <location>
        <begin position="179"/>
        <end position="196"/>
    </location>
</feature>
<feature type="topological domain" description="Lumenal" evidence="6">
    <location>
        <begin position="197"/>
        <end position="204"/>
    </location>
</feature>
<feature type="transmembrane region" description="Helical;Name=7" evidence="4">
    <location>
        <begin position="205"/>
        <end position="225"/>
    </location>
</feature>
<feature type="topological domain" description="Cytoplasmic" evidence="6">
    <location>
        <begin position="226"/>
        <end position="284"/>
    </location>
</feature>
<feature type="region of interest" description="Disordered" evidence="5">
    <location>
        <begin position="250"/>
        <end position="284"/>
    </location>
</feature>
<feature type="compositionally biased region" description="Basic and acidic residues" evidence="5">
    <location>
        <begin position="262"/>
        <end position="284"/>
    </location>
</feature>
<feature type="binding site" evidence="3">
    <location>
        <position position="117"/>
    </location>
    <ligand>
        <name>a 1,2-diacyl-sn-glycero-3-phospho-(1D-myo-inositol-4,5-bisphosphate)</name>
        <dbReference type="ChEBI" id="CHEBI:58456"/>
    </ligand>
</feature>
<feature type="binding site" evidence="3">
    <location>
        <position position="121"/>
    </location>
    <ligand>
        <name>a 1,2-diacyl-sn-glycero-3-phospho-(1D-myo-inositol-4,5-bisphosphate)</name>
        <dbReference type="ChEBI" id="CHEBI:58456"/>
    </ligand>
</feature>
<reference key="1">
    <citation type="submission" date="2006-10" db="EMBL/GenBank/DDBJ databases">
        <authorList>
            <consortium name="Sanger Xenopus tropicalis EST/cDNA project"/>
        </authorList>
    </citation>
    <scope>NUCLEOTIDE SEQUENCE [LARGE SCALE MRNA]</scope>
    <source>
        <tissue>Egg</tissue>
    </source>
</reference>
<reference key="2">
    <citation type="submission" date="2007-03" db="EMBL/GenBank/DDBJ databases">
        <authorList>
            <consortium name="NIH - Xenopus Gene Collection (XGC) project"/>
        </authorList>
    </citation>
    <scope>NUCLEOTIDE SEQUENCE [LARGE SCALE MRNA]</scope>
    <source>
        <tissue>Embryo</tissue>
    </source>
</reference>